<organism>
    <name type="scientific">Measles virus (strain Halle)</name>
    <name type="common">MeV</name>
    <name type="synonym">Subacute sclerose panencephalitis virus</name>
    <dbReference type="NCBI Taxonomy" id="11236"/>
    <lineage>
        <taxon>Viruses</taxon>
        <taxon>Riboviria</taxon>
        <taxon>Orthornavirae</taxon>
        <taxon>Negarnaviricota</taxon>
        <taxon>Haploviricotina</taxon>
        <taxon>Monjiviricetes</taxon>
        <taxon>Mononegavirales</taxon>
        <taxon>Paramyxoviridae</taxon>
        <taxon>Orthoparamyxovirinae</taxon>
        <taxon>Morbillivirus</taxon>
        <taxon>Morbillivirus hominis</taxon>
        <taxon>Measles morbillivirus</taxon>
    </lineage>
</organism>
<proteinExistence type="predicted"/>
<accession>P06831</accession>
<organismHost>
    <name type="scientific">Homo sapiens</name>
    <name type="common">Human</name>
    <dbReference type="NCBI Taxonomy" id="9606"/>
</organismHost>
<reference key="1">
    <citation type="journal article" date="1986" name="J. Gen. Virol.">
        <title>Measles virus haemagglutinin gene: cloning, complete nucleotide sequence analysis and expression in COS cells.</title>
        <authorList>
            <person name="Gerald C."/>
            <person name="Buckland R."/>
            <person name="Barker R."/>
            <person name="Freeman G."/>
            <person name="Wild T.F."/>
        </authorList>
    </citation>
    <scope>NUCLEOTIDE SEQUENCE [GENOMIC RNA]</scope>
</reference>
<protein>
    <recommendedName>
        <fullName>Putative uncharacterized 7 kDa protein</fullName>
    </recommendedName>
</protein>
<name>Y7K_MEASH</name>
<feature type="chain" id="PRO_0000142887" description="Putative uncharacterized 7 kDa protein">
    <location>
        <begin position="1"/>
        <end position="67"/>
    </location>
</feature>
<sequence length="67" mass="7376">MGPKTLVPSLLCACGLRIWWTYHSLWDGGHGSQLHSHPGRWNQSQIGLLVNQSHDVTQTSGIPTSVK</sequence>
<dbReference type="EMBL" id="X04720">
    <property type="protein sequence ID" value="CAA28428.1"/>
    <property type="molecule type" value="Genomic_RNA"/>
</dbReference>